<dbReference type="EC" id="3.5.4.2" evidence="1"/>
<dbReference type="EMBL" id="AM236080">
    <property type="protein sequence ID" value="CAK09029.1"/>
    <property type="molecule type" value="Genomic_DNA"/>
</dbReference>
<dbReference type="SMR" id="Q1MDE8"/>
<dbReference type="EnsemblBacteria" id="CAK09029">
    <property type="protein sequence ID" value="CAK09029"/>
    <property type="gene ID" value="RL3541"/>
</dbReference>
<dbReference type="KEGG" id="rle:RL3541"/>
<dbReference type="eggNOG" id="COG1001">
    <property type="taxonomic scope" value="Bacteria"/>
</dbReference>
<dbReference type="HOGENOM" id="CLU_027935_0_0_5"/>
<dbReference type="Proteomes" id="UP000006575">
    <property type="component" value="Chromosome"/>
</dbReference>
<dbReference type="GO" id="GO:0000034">
    <property type="term" value="F:adenine deaminase activity"/>
    <property type="evidence" value="ECO:0007669"/>
    <property type="project" value="UniProtKB-UniRule"/>
</dbReference>
<dbReference type="GO" id="GO:0006146">
    <property type="term" value="P:adenine catabolic process"/>
    <property type="evidence" value="ECO:0007669"/>
    <property type="project" value="InterPro"/>
</dbReference>
<dbReference type="CDD" id="cd01295">
    <property type="entry name" value="AdeC"/>
    <property type="match status" value="1"/>
</dbReference>
<dbReference type="Gene3D" id="3.20.20.140">
    <property type="entry name" value="Metal-dependent hydrolases"/>
    <property type="match status" value="1"/>
</dbReference>
<dbReference type="Gene3D" id="2.30.40.10">
    <property type="entry name" value="Urease, subunit C, domain 1"/>
    <property type="match status" value="1"/>
</dbReference>
<dbReference type="HAMAP" id="MF_01518">
    <property type="entry name" value="Adenine_deamin"/>
    <property type="match status" value="1"/>
</dbReference>
<dbReference type="InterPro" id="IPR006679">
    <property type="entry name" value="Adenine_deam"/>
</dbReference>
<dbReference type="InterPro" id="IPR026912">
    <property type="entry name" value="Adenine_deam_C"/>
</dbReference>
<dbReference type="InterPro" id="IPR006680">
    <property type="entry name" value="Amidohydro-rel"/>
</dbReference>
<dbReference type="InterPro" id="IPR011059">
    <property type="entry name" value="Metal-dep_hydrolase_composite"/>
</dbReference>
<dbReference type="InterPro" id="IPR032466">
    <property type="entry name" value="Metal_Hydrolase"/>
</dbReference>
<dbReference type="NCBIfam" id="TIGR01178">
    <property type="entry name" value="ade"/>
    <property type="match status" value="1"/>
</dbReference>
<dbReference type="PANTHER" id="PTHR11113:SF2">
    <property type="entry name" value="ADENINE DEAMINASE"/>
    <property type="match status" value="1"/>
</dbReference>
<dbReference type="PANTHER" id="PTHR11113">
    <property type="entry name" value="N-ACETYLGLUCOSAMINE-6-PHOSPHATE DEACETYLASE"/>
    <property type="match status" value="1"/>
</dbReference>
<dbReference type="Pfam" id="PF13382">
    <property type="entry name" value="Adenine_deam_C"/>
    <property type="match status" value="1"/>
</dbReference>
<dbReference type="Pfam" id="PF01979">
    <property type="entry name" value="Amidohydro_1"/>
    <property type="match status" value="1"/>
</dbReference>
<dbReference type="SUPFAM" id="SSF51338">
    <property type="entry name" value="Composite domain of metallo-dependent hydrolases"/>
    <property type="match status" value="1"/>
</dbReference>
<dbReference type="SUPFAM" id="SSF51556">
    <property type="entry name" value="Metallo-dependent hydrolases"/>
    <property type="match status" value="1"/>
</dbReference>
<organism>
    <name type="scientific">Rhizobium johnstonii (strain DSM 114642 / LMG 32736 / 3841)</name>
    <name type="common">Rhizobium leguminosarum bv. viciae</name>
    <dbReference type="NCBI Taxonomy" id="216596"/>
    <lineage>
        <taxon>Bacteria</taxon>
        <taxon>Pseudomonadati</taxon>
        <taxon>Pseudomonadota</taxon>
        <taxon>Alphaproteobacteria</taxon>
        <taxon>Hyphomicrobiales</taxon>
        <taxon>Rhizobiaceae</taxon>
        <taxon>Rhizobium/Agrobacterium group</taxon>
        <taxon>Rhizobium</taxon>
        <taxon>Rhizobium johnstonii</taxon>
    </lineage>
</organism>
<keyword id="KW-0378">Hydrolase</keyword>
<keyword id="KW-0464">Manganese</keyword>
<evidence type="ECO:0000255" key="1">
    <source>
        <dbReference type="HAMAP-Rule" id="MF_01518"/>
    </source>
</evidence>
<accession>Q1MDE8</accession>
<proteinExistence type="inferred from homology"/>
<feature type="chain" id="PRO_0000292394" description="Adenine deaminase 1">
    <location>
        <begin position="1"/>
        <end position="569"/>
    </location>
</feature>
<comment type="catalytic activity">
    <reaction evidence="1">
        <text>adenine + H2O + H(+) = hypoxanthine + NH4(+)</text>
        <dbReference type="Rhea" id="RHEA:23688"/>
        <dbReference type="ChEBI" id="CHEBI:15377"/>
        <dbReference type="ChEBI" id="CHEBI:15378"/>
        <dbReference type="ChEBI" id="CHEBI:16708"/>
        <dbReference type="ChEBI" id="CHEBI:17368"/>
        <dbReference type="ChEBI" id="CHEBI:28938"/>
        <dbReference type="EC" id="3.5.4.2"/>
    </reaction>
</comment>
<comment type="cofactor">
    <cofactor evidence="1">
        <name>Mn(2+)</name>
        <dbReference type="ChEBI" id="CHEBI:29035"/>
    </cofactor>
</comment>
<comment type="similarity">
    <text evidence="1">Belongs to the metallo-dependent hydrolases superfamily. Adenine deaminase family.</text>
</comment>
<name>ADEC1_RHIJ3</name>
<reference key="1">
    <citation type="journal article" date="2006" name="Genome Biol.">
        <title>The genome of Rhizobium leguminosarum has recognizable core and accessory components.</title>
        <authorList>
            <person name="Young J.P.W."/>
            <person name="Crossman L.C."/>
            <person name="Johnston A.W.B."/>
            <person name="Thomson N.R."/>
            <person name="Ghazoui Z.F."/>
            <person name="Hull K.H."/>
            <person name="Wexler M."/>
            <person name="Curson A.R.J."/>
            <person name="Todd J.D."/>
            <person name="Poole P.S."/>
            <person name="Mauchline T.H."/>
            <person name="East A.K."/>
            <person name="Quail M.A."/>
            <person name="Churcher C."/>
            <person name="Arrowsmith C."/>
            <person name="Cherevach I."/>
            <person name="Chillingworth T."/>
            <person name="Clarke K."/>
            <person name="Cronin A."/>
            <person name="Davis P."/>
            <person name="Fraser A."/>
            <person name="Hance Z."/>
            <person name="Hauser H."/>
            <person name="Jagels K."/>
            <person name="Moule S."/>
            <person name="Mungall K."/>
            <person name="Norbertczak H."/>
            <person name="Rabbinowitsch E."/>
            <person name="Sanders M."/>
            <person name="Simmonds M."/>
            <person name="Whitehead S."/>
            <person name="Parkhill J."/>
        </authorList>
    </citation>
    <scope>NUCLEOTIDE SEQUENCE [LARGE SCALE GENOMIC DNA]</scope>
    <source>
        <strain>DSM 114642 / LMG 32736 / 3841</strain>
    </source>
</reference>
<protein>
    <recommendedName>
        <fullName evidence="1">Adenine deaminase 1</fullName>
        <shortName evidence="1">Adenase 1</shortName>
        <shortName evidence="1">Adenine aminase 1</shortName>
        <ecNumber evidence="1">3.5.4.2</ecNumber>
    </recommendedName>
</protein>
<gene>
    <name evidence="1" type="primary">ade1</name>
    <name type="ordered locus">RL3541</name>
</gene>
<sequence length="569" mass="61076">MSNAMTSKLERFIDQGVGRVPADIVLKGGCFFDLVTGELVQSDIAIGADRIVGTSGNYEGETEIDISGRIVVPGFIDTHLHIESSLVTPHEFDRCVLPYGVTTAICDPHEIANVLGAAGIEFFLESALETIMDIRVQLSSCVPATHLETSGADLPIESLLPYRHHPKVIGLAEFMNFPGVIHKDPICMAKLDAFQGGHIDGHAPLLSGNDLNGYLAAGIRTEHECTTASEALEKIRKGVHILVREGSVSKDLAALMPIITERLSPFLALCTDDRNPLDIAEQGHLDHMIRTAIASRVEPLAIYRAASISAARAFGLKDRGLVAPGWRADLVVLDSLENCRADMVFSAGRRVTDALFSSRRPVAPIGLDSVKARPVNAAHFGVPVAEGETPVIGVIPGKIITEHRRYRLPVRGNEAAVDLANDIIKVAVIERHGKNGNHANGFVQGFGLKKGAIASTVGHDSHNICVVGVSEDDMARAANRLSEIKGGFVVVEDGKVTGEIALPIAGLMSLEPYETVRDTLHQLRKAAFALGATLEEPFLQLAFLPLPVIPHLKISDRGMVDVDKFALIG</sequence>